<name>CLSA_ECO57</name>
<reference key="1">
    <citation type="journal article" date="2001" name="Nature">
        <title>Genome sequence of enterohaemorrhagic Escherichia coli O157:H7.</title>
        <authorList>
            <person name="Perna N.T."/>
            <person name="Plunkett G. III"/>
            <person name="Burland V."/>
            <person name="Mau B."/>
            <person name="Glasner J.D."/>
            <person name="Rose D.J."/>
            <person name="Mayhew G.F."/>
            <person name="Evans P.S."/>
            <person name="Gregor J."/>
            <person name="Kirkpatrick H.A."/>
            <person name="Posfai G."/>
            <person name="Hackett J."/>
            <person name="Klink S."/>
            <person name="Boutin A."/>
            <person name="Shao Y."/>
            <person name="Miller L."/>
            <person name="Grotbeck E.J."/>
            <person name="Davis N.W."/>
            <person name="Lim A."/>
            <person name="Dimalanta E.T."/>
            <person name="Potamousis K."/>
            <person name="Apodaca J."/>
            <person name="Anantharaman T.S."/>
            <person name="Lin J."/>
            <person name="Yen G."/>
            <person name="Schwartz D.C."/>
            <person name="Welch R.A."/>
            <person name="Blattner F.R."/>
        </authorList>
    </citation>
    <scope>NUCLEOTIDE SEQUENCE [LARGE SCALE GENOMIC DNA]</scope>
    <source>
        <strain>O157:H7 / EDL933 / ATCC 700927 / EHEC</strain>
    </source>
</reference>
<reference key="2">
    <citation type="journal article" date="2001" name="DNA Res.">
        <title>Complete genome sequence of enterohemorrhagic Escherichia coli O157:H7 and genomic comparison with a laboratory strain K-12.</title>
        <authorList>
            <person name="Hayashi T."/>
            <person name="Makino K."/>
            <person name="Ohnishi M."/>
            <person name="Kurokawa K."/>
            <person name="Ishii K."/>
            <person name="Yokoyama K."/>
            <person name="Han C.-G."/>
            <person name="Ohtsubo E."/>
            <person name="Nakayama K."/>
            <person name="Murata T."/>
            <person name="Tanaka M."/>
            <person name="Tobe T."/>
            <person name="Iida T."/>
            <person name="Takami H."/>
            <person name="Honda T."/>
            <person name="Sasakawa C."/>
            <person name="Ogasawara N."/>
            <person name="Yasunaga T."/>
            <person name="Kuhara S."/>
            <person name="Shiba T."/>
            <person name="Hattori M."/>
            <person name="Shinagawa H."/>
        </authorList>
    </citation>
    <scope>NUCLEOTIDE SEQUENCE [LARGE SCALE GENOMIC DNA]</scope>
    <source>
        <strain>O157:H7 / Sakai / RIMD 0509952 / EHEC</strain>
    </source>
</reference>
<feature type="chain" id="PRO_0000201255" description="Cardiolipin synthase A">
    <location>
        <begin position="1"/>
        <end position="486"/>
    </location>
</feature>
<feature type="transmembrane region" description="Helical" evidence="1">
    <location>
        <begin position="3"/>
        <end position="23"/>
    </location>
</feature>
<feature type="transmembrane region" description="Helical" evidence="1">
    <location>
        <begin position="38"/>
        <end position="58"/>
    </location>
</feature>
<feature type="domain" description="PLD phosphodiesterase 1" evidence="1">
    <location>
        <begin position="219"/>
        <end position="246"/>
    </location>
</feature>
<feature type="domain" description="PLD phosphodiesterase 2" evidence="1">
    <location>
        <begin position="399"/>
        <end position="426"/>
    </location>
</feature>
<feature type="active site" evidence="1">
    <location>
        <position position="224"/>
    </location>
</feature>
<feature type="active site" evidence="1">
    <location>
        <position position="226"/>
    </location>
</feature>
<feature type="active site" evidence="1">
    <location>
        <position position="231"/>
    </location>
</feature>
<feature type="active site" evidence="1">
    <location>
        <position position="404"/>
    </location>
</feature>
<feature type="active site" evidence="1">
    <location>
        <position position="406"/>
    </location>
</feature>
<feature type="active site" evidence="1">
    <location>
        <position position="411"/>
    </location>
</feature>
<protein>
    <recommendedName>
        <fullName evidence="1">Cardiolipin synthase A</fullName>
        <shortName evidence="1">CL synthase</shortName>
        <ecNumber evidence="1">2.7.8.-</ecNumber>
    </recommendedName>
</protein>
<organism>
    <name type="scientific">Escherichia coli O157:H7</name>
    <dbReference type="NCBI Taxonomy" id="83334"/>
    <lineage>
        <taxon>Bacteria</taxon>
        <taxon>Pseudomonadati</taxon>
        <taxon>Pseudomonadota</taxon>
        <taxon>Gammaproteobacteria</taxon>
        <taxon>Enterobacterales</taxon>
        <taxon>Enterobacteriaceae</taxon>
        <taxon>Escherichia</taxon>
    </lineage>
</organism>
<gene>
    <name evidence="1" type="primary">clsA</name>
    <name type="synonym">cls</name>
    <name type="ordered locus">Z2026</name>
    <name type="ordered locus">ECs1749</name>
</gene>
<accession>Q8XCC6</accession>
<sequence>MTTVYTLVSWLAILGYWLLIAGVTLRILMKRRAVPSAMAWLLIIYILPLVGIIAYLAVGELHLGKRRAERARAMWPSTAKWLNDLKACKHIFAEENSSVAAPLFKLCERRQGIAGVKGNQLQLMTESDDVMQALIRDIQLARHNIEMVFYIWQPGGMADQVAESLMAAARRGIHCRLMLDSAGSVAFFHSPWPELMRNAGIEVVEALKVNLMRVFLRRMDLRQHRKMIMIDNYIAYTGSMNMVDPRYFKQDAGVGQWIDLMARMEGPIATAMGIIYSCDWEIETGKRILPPPPDVNIMPFEQASGHTIHTIASGPGFPEDLIHQALLTAAYSAREYLIMTTPYFVPSDDLLHAICTAAQRGVDVSIILPRKNDSMLVGWASRAFFTELLAAGVKVYQFEGGLLHTKSVLVDGELSLVGTVNLDMRSLWLNFEITLAIDDKGFGADLAAVQDDYISRSRLLDARLWLKRPLWQRVAERLFYFFSPLL</sequence>
<proteinExistence type="inferred from homology"/>
<comment type="function">
    <text evidence="1">Catalyzes the reversible phosphatidyl group transfer from one phosphatidylglycerol molecule to another to form cardiolipin (CL) (diphosphatidylglycerol) and glycerol.</text>
</comment>
<comment type="catalytic activity">
    <reaction evidence="1">
        <text>2 a 1,2-diacyl-sn-glycero-3-phospho-(1'-sn-glycerol) = a cardiolipin + glycerol</text>
        <dbReference type="Rhea" id="RHEA:31451"/>
        <dbReference type="ChEBI" id="CHEBI:17754"/>
        <dbReference type="ChEBI" id="CHEBI:62237"/>
        <dbReference type="ChEBI" id="CHEBI:64716"/>
    </reaction>
</comment>
<comment type="subcellular location">
    <subcellularLocation>
        <location evidence="1">Cell inner membrane</location>
        <topology evidence="1">Multi-pass membrane protein</topology>
    </subcellularLocation>
</comment>
<comment type="similarity">
    <text evidence="1">Belongs to the phospholipase D family. Cardiolipin synthase subfamily. ClsA sub-subfamily.</text>
</comment>
<keyword id="KW-0997">Cell inner membrane</keyword>
<keyword id="KW-1003">Cell membrane</keyword>
<keyword id="KW-0444">Lipid biosynthesis</keyword>
<keyword id="KW-0443">Lipid metabolism</keyword>
<keyword id="KW-0472">Membrane</keyword>
<keyword id="KW-0594">Phospholipid biosynthesis</keyword>
<keyword id="KW-1208">Phospholipid metabolism</keyword>
<keyword id="KW-1185">Reference proteome</keyword>
<keyword id="KW-0677">Repeat</keyword>
<keyword id="KW-0808">Transferase</keyword>
<keyword id="KW-0812">Transmembrane</keyword>
<keyword id="KW-1133">Transmembrane helix</keyword>
<evidence type="ECO:0000255" key="1">
    <source>
        <dbReference type="HAMAP-Rule" id="MF_00190"/>
    </source>
</evidence>
<dbReference type="EC" id="2.7.8.-" evidence="1"/>
<dbReference type="EMBL" id="AE005174">
    <property type="protein sequence ID" value="AAG56104.1"/>
    <property type="molecule type" value="Genomic_DNA"/>
</dbReference>
<dbReference type="EMBL" id="BA000007">
    <property type="protein sequence ID" value="BAB35172.1"/>
    <property type="molecule type" value="Genomic_DNA"/>
</dbReference>
<dbReference type="PIR" id="D85705">
    <property type="entry name" value="D85705"/>
</dbReference>
<dbReference type="PIR" id="E90847">
    <property type="entry name" value="E90847"/>
</dbReference>
<dbReference type="RefSeq" id="NP_309776.1">
    <property type="nucleotide sequence ID" value="NC_002695.1"/>
</dbReference>
<dbReference type="RefSeq" id="WP_000214510.1">
    <property type="nucleotide sequence ID" value="NZ_VOAI01000031.1"/>
</dbReference>
<dbReference type="SMR" id="Q8XCC6"/>
<dbReference type="STRING" id="155864.Z2026"/>
<dbReference type="GeneID" id="913102"/>
<dbReference type="KEGG" id="ece:Z2026"/>
<dbReference type="KEGG" id="ecs:ECs_1749"/>
<dbReference type="PATRIC" id="fig|386585.9.peg.1851"/>
<dbReference type="eggNOG" id="COG1502">
    <property type="taxonomic scope" value="Bacteria"/>
</dbReference>
<dbReference type="HOGENOM" id="CLU_038053_1_0_6"/>
<dbReference type="OMA" id="WLNFEVT"/>
<dbReference type="Proteomes" id="UP000000558">
    <property type="component" value="Chromosome"/>
</dbReference>
<dbReference type="Proteomes" id="UP000002519">
    <property type="component" value="Chromosome"/>
</dbReference>
<dbReference type="GO" id="GO:0005886">
    <property type="term" value="C:plasma membrane"/>
    <property type="evidence" value="ECO:0007669"/>
    <property type="project" value="UniProtKB-SubCell"/>
</dbReference>
<dbReference type="GO" id="GO:0008808">
    <property type="term" value="F:cardiolipin synthase activity"/>
    <property type="evidence" value="ECO:0007669"/>
    <property type="project" value="InterPro"/>
</dbReference>
<dbReference type="GO" id="GO:0032049">
    <property type="term" value="P:cardiolipin biosynthetic process"/>
    <property type="evidence" value="ECO:0007669"/>
    <property type="project" value="InterPro"/>
</dbReference>
<dbReference type="CDD" id="cd09152">
    <property type="entry name" value="PLDc_EcCLS_like_1"/>
    <property type="match status" value="1"/>
</dbReference>
<dbReference type="CDD" id="cd09158">
    <property type="entry name" value="PLDc_EcCLS_like_2"/>
    <property type="match status" value="1"/>
</dbReference>
<dbReference type="FunFam" id="3.30.870.10:FF:000002">
    <property type="entry name" value="Cardiolipin synthase A"/>
    <property type="match status" value="1"/>
</dbReference>
<dbReference type="FunFam" id="3.30.870.10:FF:000003">
    <property type="entry name" value="Cardiolipin synthase A"/>
    <property type="match status" value="1"/>
</dbReference>
<dbReference type="Gene3D" id="3.30.870.10">
    <property type="entry name" value="Endonuclease Chain A"/>
    <property type="match status" value="2"/>
</dbReference>
<dbReference type="HAMAP" id="MF_00190">
    <property type="entry name" value="Cardiolipin_synth_ClsA"/>
    <property type="match status" value="1"/>
</dbReference>
<dbReference type="InterPro" id="IPR022924">
    <property type="entry name" value="Cardiolipin_synthase"/>
</dbReference>
<dbReference type="InterPro" id="IPR030840">
    <property type="entry name" value="CL_synthase_A"/>
</dbReference>
<dbReference type="InterPro" id="IPR027379">
    <property type="entry name" value="CLS_N"/>
</dbReference>
<dbReference type="InterPro" id="IPR025202">
    <property type="entry name" value="PLD-like_dom"/>
</dbReference>
<dbReference type="InterPro" id="IPR001736">
    <property type="entry name" value="PLipase_D/transphosphatidylase"/>
</dbReference>
<dbReference type="NCBIfam" id="TIGR04265">
    <property type="entry name" value="bac_cardiolipin"/>
    <property type="match status" value="1"/>
</dbReference>
<dbReference type="PANTHER" id="PTHR21248">
    <property type="entry name" value="CARDIOLIPIN SYNTHASE"/>
    <property type="match status" value="1"/>
</dbReference>
<dbReference type="PANTHER" id="PTHR21248:SF22">
    <property type="entry name" value="PHOSPHOLIPASE D"/>
    <property type="match status" value="1"/>
</dbReference>
<dbReference type="Pfam" id="PF13091">
    <property type="entry name" value="PLDc_2"/>
    <property type="match status" value="2"/>
</dbReference>
<dbReference type="Pfam" id="PF13396">
    <property type="entry name" value="PLDc_N"/>
    <property type="match status" value="1"/>
</dbReference>
<dbReference type="SMART" id="SM00155">
    <property type="entry name" value="PLDc"/>
    <property type="match status" value="2"/>
</dbReference>
<dbReference type="SUPFAM" id="SSF56024">
    <property type="entry name" value="Phospholipase D/nuclease"/>
    <property type="match status" value="2"/>
</dbReference>
<dbReference type="PROSITE" id="PS50035">
    <property type="entry name" value="PLD"/>
    <property type="match status" value="2"/>
</dbReference>